<keyword id="KW-0963">Cytoplasm</keyword>
<keyword id="KW-0256">Endoplasmic reticulum</keyword>
<keyword id="KW-0931">ER-Golgi transport</keyword>
<keyword id="KW-0333">Golgi apparatus</keyword>
<keyword id="KW-0342">GTP-binding</keyword>
<keyword id="KW-0378">Hydrolase</keyword>
<keyword id="KW-0458">Lysosome</keyword>
<keyword id="KW-0460">Magnesium</keyword>
<keyword id="KW-0472">Membrane</keyword>
<keyword id="KW-0479">Metal-binding</keyword>
<keyword id="KW-0547">Nucleotide-binding</keyword>
<keyword id="KW-0597">Phosphoprotein</keyword>
<keyword id="KW-0653">Protein transport</keyword>
<keyword id="KW-1185">Reference proteome</keyword>
<keyword id="KW-0813">Transport</keyword>
<proteinExistence type="evidence at transcript level"/>
<accession>Q5R548</accession>
<gene>
    <name evidence="1" type="primary">SAR1A</name>
</gene>
<feature type="chain" id="PRO_0000249777" description="Small COPII coat GTPase SAR1A">
    <location>
        <begin position="1"/>
        <end position="198"/>
    </location>
</feature>
<feature type="region of interest" description="Mediates recruitment to ER membranes" evidence="2">
    <location>
        <begin position="15"/>
        <end position="19"/>
    </location>
</feature>
<feature type="short sequence motif" description="STAR; SAR1-N-terminal activation recruitment. Required for the activation by PREB and subsequent recruitment to ER membrane" evidence="2">
    <location>
        <begin position="3"/>
        <end position="5"/>
    </location>
</feature>
<feature type="binding site" evidence="1">
    <location>
        <position position="34"/>
    </location>
    <ligand>
        <name>Mg(2+)</name>
        <dbReference type="ChEBI" id="CHEBI:18420"/>
    </ligand>
</feature>
<feature type="binding site" evidence="1">
    <location>
        <position position="35"/>
    </location>
    <ligand>
        <name>GDP</name>
        <dbReference type="ChEBI" id="CHEBI:58189"/>
    </ligand>
</feature>
<feature type="binding site" evidence="3">
    <location>
        <position position="35"/>
    </location>
    <ligand>
        <name>GTP</name>
        <dbReference type="ChEBI" id="CHEBI:37565"/>
    </ligand>
</feature>
<feature type="binding site" evidence="1">
    <location>
        <position position="36"/>
    </location>
    <ligand>
        <name>GDP</name>
        <dbReference type="ChEBI" id="CHEBI:58189"/>
    </ligand>
</feature>
<feature type="binding site" evidence="1">
    <location>
        <position position="37"/>
    </location>
    <ligand>
        <name>GDP</name>
        <dbReference type="ChEBI" id="CHEBI:58189"/>
    </ligand>
</feature>
<feature type="binding site" evidence="3">
    <location>
        <position position="37"/>
    </location>
    <ligand>
        <name>GTP</name>
        <dbReference type="ChEBI" id="CHEBI:37565"/>
    </ligand>
</feature>
<feature type="binding site" evidence="1">
    <location>
        <position position="38"/>
    </location>
    <ligand>
        <name>GDP</name>
        <dbReference type="ChEBI" id="CHEBI:58189"/>
    </ligand>
</feature>
<feature type="binding site" evidence="3">
    <location>
        <position position="38"/>
    </location>
    <ligand>
        <name>GTP</name>
        <dbReference type="ChEBI" id="CHEBI:37565"/>
    </ligand>
</feature>
<feature type="binding site" evidence="1">
    <location>
        <position position="39"/>
    </location>
    <ligand>
        <name>GDP</name>
        <dbReference type="ChEBI" id="CHEBI:58189"/>
    </ligand>
</feature>
<feature type="binding site" evidence="3">
    <location>
        <position position="39"/>
    </location>
    <ligand>
        <name>GTP</name>
        <dbReference type="ChEBI" id="CHEBI:37565"/>
    </ligand>
</feature>
<feature type="binding site" evidence="1">
    <location>
        <position position="40"/>
    </location>
    <ligand>
        <name>GDP</name>
        <dbReference type="ChEBI" id="CHEBI:58189"/>
    </ligand>
</feature>
<feature type="binding site" evidence="3">
    <location>
        <position position="40"/>
    </location>
    <ligand>
        <name>GTP</name>
        <dbReference type="ChEBI" id="CHEBI:37565"/>
    </ligand>
</feature>
<feature type="binding site" evidence="1">
    <location>
        <position position="75"/>
    </location>
    <ligand>
        <name>Mg(2+)</name>
        <dbReference type="ChEBI" id="CHEBI:18420"/>
    </ligand>
</feature>
<feature type="binding site" evidence="1">
    <location>
        <position position="134"/>
    </location>
    <ligand>
        <name>GDP</name>
        <dbReference type="ChEBI" id="CHEBI:58189"/>
    </ligand>
</feature>
<feature type="binding site" evidence="3">
    <location>
        <position position="134"/>
    </location>
    <ligand>
        <name>GTP</name>
        <dbReference type="ChEBI" id="CHEBI:37565"/>
    </ligand>
</feature>
<feature type="binding site" evidence="1">
    <location>
        <position position="135"/>
    </location>
    <ligand>
        <name>GDP</name>
        <dbReference type="ChEBI" id="CHEBI:58189"/>
    </ligand>
</feature>
<feature type="binding site" evidence="3">
    <location>
        <position position="135"/>
    </location>
    <ligand>
        <name>GTP</name>
        <dbReference type="ChEBI" id="CHEBI:37565"/>
    </ligand>
</feature>
<feature type="binding site" evidence="1">
    <location>
        <position position="137"/>
    </location>
    <ligand>
        <name>GDP</name>
        <dbReference type="ChEBI" id="CHEBI:58189"/>
    </ligand>
</feature>
<feature type="binding site" evidence="3">
    <location>
        <position position="137"/>
    </location>
    <ligand>
        <name>GTP</name>
        <dbReference type="ChEBI" id="CHEBI:37565"/>
    </ligand>
</feature>
<feature type="binding site" evidence="1">
    <location>
        <position position="180"/>
    </location>
    <ligand>
        <name>GDP</name>
        <dbReference type="ChEBI" id="CHEBI:58189"/>
    </ligand>
</feature>
<feature type="binding site" evidence="3">
    <location>
        <position position="180"/>
    </location>
    <ligand>
        <name>GTP</name>
        <dbReference type="ChEBI" id="CHEBI:37565"/>
    </ligand>
</feature>
<feature type="binding site" evidence="1">
    <location>
        <position position="181"/>
    </location>
    <ligand>
        <name>GDP</name>
        <dbReference type="ChEBI" id="CHEBI:58189"/>
    </ligand>
</feature>
<feature type="binding site" evidence="3">
    <location>
        <position position="181"/>
    </location>
    <ligand>
        <name>GTP</name>
        <dbReference type="ChEBI" id="CHEBI:37565"/>
    </ligand>
</feature>
<feature type="modified residue" description="Phosphothreonine" evidence="1">
    <location>
        <position position="139"/>
    </location>
</feature>
<name>SAR1A_PONAB</name>
<organism>
    <name type="scientific">Pongo abelii</name>
    <name type="common">Sumatran orangutan</name>
    <name type="synonym">Pongo pygmaeus abelii</name>
    <dbReference type="NCBI Taxonomy" id="9601"/>
    <lineage>
        <taxon>Eukaryota</taxon>
        <taxon>Metazoa</taxon>
        <taxon>Chordata</taxon>
        <taxon>Craniata</taxon>
        <taxon>Vertebrata</taxon>
        <taxon>Euteleostomi</taxon>
        <taxon>Mammalia</taxon>
        <taxon>Eutheria</taxon>
        <taxon>Euarchontoglires</taxon>
        <taxon>Primates</taxon>
        <taxon>Haplorrhini</taxon>
        <taxon>Catarrhini</taxon>
        <taxon>Hominidae</taxon>
        <taxon>Pongo</taxon>
    </lineage>
</organism>
<evidence type="ECO:0000250" key="1">
    <source>
        <dbReference type="UniProtKB" id="Q9NR31"/>
    </source>
</evidence>
<evidence type="ECO:0000250" key="2">
    <source>
        <dbReference type="UniProtKB" id="Q9QVY3"/>
    </source>
</evidence>
<evidence type="ECO:0000250" key="3">
    <source>
        <dbReference type="UniProtKB" id="Q9Y6B6"/>
    </source>
</evidence>
<evidence type="ECO:0000305" key="4"/>
<comment type="function">
    <text evidence="1">Small GTPase that cycles between an active GTP-bound and an inactive GDP-bound state and mainly functions in vesicle-mediated endoplasmic reticulum (ER) to Golgi transport. The active GTP-bound form inserts into the endoplasmic reticulum membrane where it recruits the remainder of the coat protein complex II/COPII. The coat protein complex II assembling and polymerizing on endoplasmic reticulum membrane is responsible for both the sorting of cargos and the deformation and budding of membranes into vesicles destined to the Golgi. The GTPase activity of SAR1 by controlling the timing of COPII budding regulates the size of the formed vesicles and is important for cargo selection depending on their size. Together with SEC16A, forms the organized scaffold defining endoplasmic reticulum exit sites (ERES), some specific domains of the endoplasmic reticulum where COPII vesicles form. In addition to its role in vesicle trafficking, can also function as a leucine sensor regulating TORC1 signaling and more indirectly cellular metabolism, growth and survival. In absence of leucine, interacts with the GATOR2 complex via MIOS and inhibits TORC1 signaling. The binding of leucine abrogates the interaction with GATOR2 and the inhibition of the TORC1 signaling. This function is completely independent of the GTPase activity of SAR1B.</text>
</comment>
<comment type="catalytic activity">
    <reaction evidence="1">
        <text>GTP + H2O = GDP + phosphate + H(+)</text>
        <dbReference type="Rhea" id="RHEA:19669"/>
        <dbReference type="ChEBI" id="CHEBI:15377"/>
        <dbReference type="ChEBI" id="CHEBI:15378"/>
        <dbReference type="ChEBI" id="CHEBI:37565"/>
        <dbReference type="ChEBI" id="CHEBI:43474"/>
        <dbReference type="ChEBI" id="CHEBI:58189"/>
        <dbReference type="EC" id="3.6.5.2"/>
    </reaction>
    <physiologicalReaction direction="left-to-right" evidence="1">
        <dbReference type="Rhea" id="RHEA:19670"/>
    </physiologicalReaction>
</comment>
<comment type="activity regulation">
    <text evidence="1">Small GTPases activation is mediated by guanine exchange factors (GEF), while inactivation through hydrolysis of the bound GTP is stimulated by GTPase activating proteins (GAP). Activated by the guanine nucleotide exchange factor PREB/SEC12 that facilitates the loading of SAR1B with GTP.</text>
</comment>
<comment type="subunit">
    <text evidence="1">Homodimer; upon association with membrane. Part of the coat protein complex II/COPII, composed of SEC23/24 and SEC13/31 heterodimers, that it helps recruit and assemble on endoplasmic reticulum (ER) membranes at ER exit sites. Interacts with PREB; PREB acts as a guanine nucleotide exchange factor facilitating the activation of SAR1B by loading it with GTP. Interacts with B3GAT1. Interacts with MIOS; the interaction is direct, disrupted by the binding of leucine and mediates the interaction of SAR1A with the GATOR2 complex to negatively regulate the TORC1 signaling upon leucine deprivation.</text>
</comment>
<comment type="subcellular location">
    <subcellularLocation>
        <location evidence="1">Endoplasmic reticulum membrane</location>
        <topology evidence="1">Peripheral membrane protein</topology>
    </subcellularLocation>
    <subcellularLocation>
        <location evidence="1">Golgi apparatus</location>
        <location evidence="1">Golgi stack membrane</location>
        <topology evidence="1">Peripheral membrane protein</topology>
    </subcellularLocation>
    <subcellularLocation>
        <location evidence="1">Cytoplasm</location>
        <location evidence="1">Cytosol</location>
    </subcellularLocation>
    <subcellularLocation>
        <location evidence="1">Lysosome membrane</location>
    </subcellularLocation>
    <text evidence="1">Active at endoplasmic reticulum exit sites (ERES) where it inserts into the membrane and recruits the remainder of the coat protein complex II/COPII. Upon leucine deprivation, associates with lysosomal membranes to repress TORC1 signaling.</text>
</comment>
<comment type="similarity">
    <text evidence="4">Belongs to the small GTPase superfamily. SAR1 family.</text>
</comment>
<reference key="1">
    <citation type="submission" date="2004-11" db="EMBL/GenBank/DDBJ databases">
        <authorList>
            <consortium name="The German cDNA consortium"/>
        </authorList>
    </citation>
    <scope>NUCLEOTIDE SEQUENCE [LARGE SCALE MRNA]</scope>
    <source>
        <tissue>Liver</tissue>
    </source>
</reference>
<protein>
    <recommendedName>
        <fullName evidence="1">Small COPII coat GTPase SAR1A</fullName>
        <ecNumber evidence="1">3.6.5.2</ecNumber>
    </recommendedName>
</protein>
<sequence>MSFIFEWIYNGFSSVLQFLGLYKKSGKLVFLGLDNAGKTTLLHMLKDDRLGQHVPTLHPTSEELTIAGMTFTTFDLGGHEQARRVWKNYLPAINGIVFLVDCADHSRLVESKVELNALMTDETISNVPILILGNKIDRTDAISEEKLREIFGLYGQTTGKGNVTLKELNARPMEVFMCSVLKRQGYGEGFRWLSQYID</sequence>
<dbReference type="EC" id="3.6.5.2" evidence="1"/>
<dbReference type="EMBL" id="CR861024">
    <property type="protein sequence ID" value="CAH93118.1"/>
    <property type="molecule type" value="mRNA"/>
</dbReference>
<dbReference type="RefSeq" id="NP_001126844.1">
    <property type="nucleotide sequence ID" value="NM_001133372.1"/>
</dbReference>
<dbReference type="RefSeq" id="XP_009243799.1">
    <property type="nucleotide sequence ID" value="XM_009245524.4"/>
</dbReference>
<dbReference type="RefSeq" id="XP_009243800.1">
    <property type="nucleotide sequence ID" value="XM_009245525.1"/>
</dbReference>
<dbReference type="RefSeq" id="XP_054377646.1">
    <property type="nucleotide sequence ID" value="XM_054521671.2"/>
</dbReference>
<dbReference type="RefSeq" id="XP_063583213.1">
    <property type="nucleotide sequence ID" value="XM_063727143.1"/>
</dbReference>
<dbReference type="RefSeq" id="XP_063583214.1">
    <property type="nucleotide sequence ID" value="XM_063727144.1"/>
</dbReference>
<dbReference type="RefSeq" id="XP_063583215.1">
    <property type="nucleotide sequence ID" value="XM_063727145.1"/>
</dbReference>
<dbReference type="RefSeq" id="XP_063583216.1">
    <property type="nucleotide sequence ID" value="XM_063727146.1"/>
</dbReference>
<dbReference type="SMR" id="Q5R548"/>
<dbReference type="FunCoup" id="Q5R548">
    <property type="interactions" value="1793"/>
</dbReference>
<dbReference type="STRING" id="9601.ENSPPYP00000002755"/>
<dbReference type="Ensembl" id="ENSPPYT00000002849.3">
    <property type="protein sequence ID" value="ENSPPYP00000002755.2"/>
    <property type="gene ID" value="ENSPPYG00000002374.3"/>
</dbReference>
<dbReference type="GeneID" id="100173852"/>
<dbReference type="KEGG" id="pon:100173852"/>
<dbReference type="CTD" id="56681"/>
<dbReference type="eggNOG" id="KOG0077">
    <property type="taxonomic scope" value="Eukaryota"/>
</dbReference>
<dbReference type="GeneTree" id="ENSGT00940000155276"/>
<dbReference type="HOGENOM" id="CLU_040729_6_0_1"/>
<dbReference type="InParanoid" id="Q5R548"/>
<dbReference type="OMA" id="GLWNKHG"/>
<dbReference type="OrthoDB" id="15478at2759"/>
<dbReference type="TreeFam" id="TF312890"/>
<dbReference type="Proteomes" id="UP000001595">
    <property type="component" value="Chromosome 10"/>
</dbReference>
<dbReference type="GO" id="GO:0030127">
    <property type="term" value="C:COPII vesicle coat"/>
    <property type="evidence" value="ECO:0000250"/>
    <property type="project" value="UniProtKB"/>
</dbReference>
<dbReference type="GO" id="GO:0005829">
    <property type="term" value="C:cytosol"/>
    <property type="evidence" value="ECO:0007669"/>
    <property type="project" value="UniProtKB-SubCell"/>
</dbReference>
<dbReference type="GO" id="GO:0070971">
    <property type="term" value="C:endoplasmic reticulum exit site"/>
    <property type="evidence" value="ECO:0000250"/>
    <property type="project" value="UniProtKB"/>
</dbReference>
<dbReference type="GO" id="GO:0005789">
    <property type="term" value="C:endoplasmic reticulum membrane"/>
    <property type="evidence" value="ECO:0007669"/>
    <property type="project" value="UniProtKB-SubCell"/>
</dbReference>
<dbReference type="GO" id="GO:0032580">
    <property type="term" value="C:Golgi cisterna membrane"/>
    <property type="evidence" value="ECO:0007669"/>
    <property type="project" value="UniProtKB-SubCell"/>
</dbReference>
<dbReference type="GO" id="GO:0005765">
    <property type="term" value="C:lysosomal membrane"/>
    <property type="evidence" value="ECO:0007669"/>
    <property type="project" value="UniProtKB-SubCell"/>
</dbReference>
<dbReference type="GO" id="GO:0140785">
    <property type="term" value="F:amino acid sensor activity"/>
    <property type="evidence" value="ECO:0007669"/>
    <property type="project" value="Ensembl"/>
</dbReference>
<dbReference type="GO" id="GO:0003925">
    <property type="term" value="F:G protein activity"/>
    <property type="evidence" value="ECO:0000250"/>
    <property type="project" value="UniProtKB"/>
</dbReference>
<dbReference type="GO" id="GO:0005525">
    <property type="term" value="F:GTP binding"/>
    <property type="evidence" value="ECO:0007669"/>
    <property type="project" value="UniProtKB-KW"/>
</dbReference>
<dbReference type="GO" id="GO:0046872">
    <property type="term" value="F:metal ion binding"/>
    <property type="evidence" value="ECO:0007669"/>
    <property type="project" value="UniProtKB-KW"/>
</dbReference>
<dbReference type="GO" id="GO:1990253">
    <property type="term" value="P:cellular response to leucine starvation"/>
    <property type="evidence" value="ECO:0007669"/>
    <property type="project" value="Ensembl"/>
</dbReference>
<dbReference type="GO" id="GO:0048208">
    <property type="term" value="P:COPII vesicle coating"/>
    <property type="evidence" value="ECO:0000250"/>
    <property type="project" value="UniProtKB"/>
</dbReference>
<dbReference type="GO" id="GO:0090110">
    <property type="term" value="P:COPII-coated vesicle cargo loading"/>
    <property type="evidence" value="ECO:0000250"/>
    <property type="project" value="UniProtKB"/>
</dbReference>
<dbReference type="GO" id="GO:0006888">
    <property type="term" value="P:endoplasmic reticulum to Golgi vesicle-mediated transport"/>
    <property type="evidence" value="ECO:0000250"/>
    <property type="project" value="UniProtKB"/>
</dbReference>
<dbReference type="GO" id="GO:0006886">
    <property type="term" value="P:intracellular protein transport"/>
    <property type="evidence" value="ECO:0007669"/>
    <property type="project" value="InterPro"/>
</dbReference>
<dbReference type="GO" id="GO:1904262">
    <property type="term" value="P:negative regulation of TORC1 signaling"/>
    <property type="evidence" value="ECO:0007669"/>
    <property type="project" value="Ensembl"/>
</dbReference>
<dbReference type="CDD" id="cd00879">
    <property type="entry name" value="Sar1"/>
    <property type="match status" value="1"/>
</dbReference>
<dbReference type="FunFam" id="3.40.50.300:FF:000161">
    <property type="entry name" value="Small COPII coat GTPase"/>
    <property type="match status" value="1"/>
</dbReference>
<dbReference type="Gene3D" id="3.40.50.300">
    <property type="entry name" value="P-loop containing nucleotide triphosphate hydrolases"/>
    <property type="match status" value="1"/>
</dbReference>
<dbReference type="InterPro" id="IPR027417">
    <property type="entry name" value="P-loop_NTPase"/>
</dbReference>
<dbReference type="InterPro" id="IPR005225">
    <property type="entry name" value="Small_GTP-bd"/>
</dbReference>
<dbReference type="InterPro" id="IPR006689">
    <property type="entry name" value="Small_GTPase_ARF/SAR"/>
</dbReference>
<dbReference type="InterPro" id="IPR006687">
    <property type="entry name" value="Small_GTPase_SAR1"/>
</dbReference>
<dbReference type="NCBIfam" id="TIGR00231">
    <property type="entry name" value="small_GTP"/>
    <property type="match status" value="1"/>
</dbReference>
<dbReference type="PANTHER" id="PTHR45684">
    <property type="entry name" value="RE74312P"/>
    <property type="match status" value="1"/>
</dbReference>
<dbReference type="Pfam" id="PF00025">
    <property type="entry name" value="Arf"/>
    <property type="match status" value="1"/>
</dbReference>
<dbReference type="PRINTS" id="PR00328">
    <property type="entry name" value="SAR1GTPBP"/>
</dbReference>
<dbReference type="SMART" id="SM00177">
    <property type="entry name" value="ARF"/>
    <property type="match status" value="1"/>
</dbReference>
<dbReference type="SMART" id="SM00178">
    <property type="entry name" value="SAR"/>
    <property type="match status" value="1"/>
</dbReference>
<dbReference type="SUPFAM" id="SSF52540">
    <property type="entry name" value="P-loop containing nucleoside triphosphate hydrolases"/>
    <property type="match status" value="1"/>
</dbReference>
<dbReference type="PROSITE" id="PS51422">
    <property type="entry name" value="SAR1"/>
    <property type="match status" value="1"/>
</dbReference>